<comment type="function">
    <text evidence="1">Palmitoyltransferase that could catalyze the addition of palmitate onto various protein substrates. Catalyzes palmitoylation of Cys residues in the cytoplasmic C-terminus of EGFR, and modulates the duration of EGFR signaling by modulating palmitoylation-dependent EGFR internalization and degradation. Has a preference for acyl-CoA with C16 fatty acid chains. Can also utilize acyl-CoA with C14 and C18 fatty acid chains. May palmitoylate CALHM1 subunit of gustatory voltage-gated ion channels and modulate channel gating and kinetics.</text>
</comment>
<comment type="catalytic activity">
    <reaction evidence="1">
        <text>L-cysteinyl-[protein] + hexadecanoyl-CoA = S-hexadecanoyl-L-cysteinyl-[protein] + CoA</text>
        <dbReference type="Rhea" id="RHEA:36683"/>
        <dbReference type="Rhea" id="RHEA-COMP:10131"/>
        <dbReference type="Rhea" id="RHEA-COMP:11032"/>
        <dbReference type="ChEBI" id="CHEBI:29950"/>
        <dbReference type="ChEBI" id="CHEBI:57287"/>
        <dbReference type="ChEBI" id="CHEBI:57379"/>
        <dbReference type="ChEBI" id="CHEBI:74151"/>
        <dbReference type="EC" id="2.3.1.225"/>
    </reaction>
    <physiologicalReaction direction="left-to-right" evidence="1">
        <dbReference type="Rhea" id="RHEA:36684"/>
    </physiologicalReaction>
</comment>
<comment type="catalytic activity">
    <reaction evidence="1">
        <text>L-cysteinyl-[protein] + tetradecanoyl-CoA = S-tetradecanoyl-L-cysteinyl-[protein] + CoA</text>
        <dbReference type="Rhea" id="RHEA:59736"/>
        <dbReference type="Rhea" id="RHEA-COMP:10131"/>
        <dbReference type="Rhea" id="RHEA-COMP:15433"/>
        <dbReference type="ChEBI" id="CHEBI:29950"/>
        <dbReference type="ChEBI" id="CHEBI:57287"/>
        <dbReference type="ChEBI" id="CHEBI:57385"/>
        <dbReference type="ChEBI" id="CHEBI:143199"/>
    </reaction>
    <physiologicalReaction direction="left-to-right" evidence="1">
        <dbReference type="Rhea" id="RHEA:59737"/>
    </physiologicalReaction>
</comment>
<comment type="catalytic activity">
    <reaction evidence="1">
        <text>L-cysteinyl-[protein] + octadecanoyl-CoA = S-octadecanoyl-L-cysteinyl-[protein] + CoA</text>
        <dbReference type="Rhea" id="RHEA:59740"/>
        <dbReference type="Rhea" id="RHEA-COMP:10131"/>
        <dbReference type="Rhea" id="RHEA-COMP:15434"/>
        <dbReference type="ChEBI" id="CHEBI:29950"/>
        <dbReference type="ChEBI" id="CHEBI:57287"/>
        <dbReference type="ChEBI" id="CHEBI:57394"/>
        <dbReference type="ChEBI" id="CHEBI:143200"/>
    </reaction>
    <physiologicalReaction direction="left-to-right" evidence="1">
        <dbReference type="Rhea" id="RHEA:59741"/>
    </physiologicalReaction>
</comment>
<comment type="subcellular location">
    <subcellularLocation>
        <location evidence="1">Golgi apparatus membrane</location>
        <topology evidence="1">Multi-pass membrane protein</topology>
    </subcellularLocation>
    <subcellularLocation>
        <location evidence="1">Cell membrane</location>
        <topology evidence="1">Multi-pass membrane protein</topology>
    </subcellularLocation>
    <subcellularLocation>
        <location evidence="1">Cytoplasm</location>
        <location evidence="1">Perinuclear region</location>
    </subcellularLocation>
    <subcellularLocation>
        <location evidence="1">Endoplasmic reticulum membrane</location>
        <topology evidence="2">Multi-pass membrane protein</topology>
    </subcellularLocation>
    <subcellularLocation>
        <location evidence="1">Endoplasmic reticulum-Golgi intermediate compartment membrane</location>
        <topology evidence="2">Multi-pass membrane protein</topology>
    </subcellularLocation>
</comment>
<comment type="domain">
    <text evidence="1">The DHHC domain is required for palmitoyltransferase activity.</text>
</comment>
<comment type="PTM">
    <text evidence="1">Autopalmitoylated (in vitro).</text>
</comment>
<comment type="similarity">
    <text evidence="5">Belongs to the DHHC palmitoyltransferase family.</text>
</comment>
<organism>
    <name type="scientific">Bos taurus</name>
    <name type="common">Bovine</name>
    <dbReference type="NCBI Taxonomy" id="9913"/>
    <lineage>
        <taxon>Eukaryota</taxon>
        <taxon>Metazoa</taxon>
        <taxon>Chordata</taxon>
        <taxon>Craniata</taxon>
        <taxon>Vertebrata</taxon>
        <taxon>Euteleostomi</taxon>
        <taxon>Mammalia</taxon>
        <taxon>Eutheria</taxon>
        <taxon>Laurasiatheria</taxon>
        <taxon>Artiodactyla</taxon>
        <taxon>Ruminantia</taxon>
        <taxon>Pecora</taxon>
        <taxon>Bovidae</taxon>
        <taxon>Bovinae</taxon>
        <taxon>Bos</taxon>
    </lineage>
</organism>
<dbReference type="EC" id="2.3.1.225" evidence="1"/>
<dbReference type="EC" id="2.3.1.-" evidence="1"/>
<dbReference type="EMBL" id="BC120294">
    <property type="protein sequence ID" value="AAI20295.1"/>
    <property type="molecule type" value="mRNA"/>
</dbReference>
<dbReference type="RefSeq" id="NP_001069856.1">
    <property type="nucleotide sequence ID" value="NM_001076388.2"/>
</dbReference>
<dbReference type="RefSeq" id="XP_005213858.1">
    <property type="nucleotide sequence ID" value="XM_005213801.3"/>
</dbReference>
<dbReference type="RefSeq" id="XP_005213859.1">
    <property type="nucleotide sequence ID" value="XM_005213802.3"/>
</dbReference>
<dbReference type="SMR" id="Q0VC89"/>
<dbReference type="FunCoup" id="Q0VC89">
    <property type="interactions" value="2925"/>
</dbReference>
<dbReference type="STRING" id="9913.ENSBTAP00000008119"/>
<dbReference type="PaxDb" id="9913-ENSBTAP00000008119"/>
<dbReference type="Ensembl" id="ENSBTAT00000078233.2">
    <property type="protein sequence ID" value="ENSBTAP00000059434.1"/>
    <property type="gene ID" value="ENSBTAG00000006177.7"/>
</dbReference>
<dbReference type="GeneID" id="615659"/>
<dbReference type="KEGG" id="bta:615659"/>
<dbReference type="CTD" id="253832"/>
<dbReference type="VEuPathDB" id="HostDB:ENSBTAG00000006177"/>
<dbReference type="VGNC" id="VGNC:37136">
    <property type="gene designation" value="ZDHHC20"/>
</dbReference>
<dbReference type="eggNOG" id="KOG1315">
    <property type="taxonomic scope" value="Eukaryota"/>
</dbReference>
<dbReference type="GeneTree" id="ENSGT00940000153716"/>
<dbReference type="HOGENOM" id="CLU_027721_1_3_1"/>
<dbReference type="InParanoid" id="Q0VC89"/>
<dbReference type="OMA" id="EQHANNT"/>
<dbReference type="OrthoDB" id="9909019at2759"/>
<dbReference type="TreeFam" id="TF316044"/>
<dbReference type="Proteomes" id="UP000009136">
    <property type="component" value="Chromosome 12"/>
</dbReference>
<dbReference type="Bgee" id="ENSBTAG00000006177">
    <property type="expression patterns" value="Expressed in monocyte and 110 other cell types or tissues"/>
</dbReference>
<dbReference type="GO" id="GO:0005783">
    <property type="term" value="C:endoplasmic reticulum"/>
    <property type="evidence" value="ECO:0000318"/>
    <property type="project" value="GO_Central"/>
</dbReference>
<dbReference type="GO" id="GO:0005789">
    <property type="term" value="C:endoplasmic reticulum membrane"/>
    <property type="evidence" value="ECO:0007669"/>
    <property type="project" value="UniProtKB-SubCell"/>
</dbReference>
<dbReference type="GO" id="GO:0033116">
    <property type="term" value="C:endoplasmic reticulum-Golgi intermediate compartment membrane"/>
    <property type="evidence" value="ECO:0007669"/>
    <property type="project" value="UniProtKB-SubCell"/>
</dbReference>
<dbReference type="GO" id="GO:0005794">
    <property type="term" value="C:Golgi apparatus"/>
    <property type="evidence" value="ECO:0000318"/>
    <property type="project" value="GO_Central"/>
</dbReference>
<dbReference type="GO" id="GO:0000139">
    <property type="term" value="C:Golgi membrane"/>
    <property type="evidence" value="ECO:0000250"/>
    <property type="project" value="UniProtKB"/>
</dbReference>
<dbReference type="GO" id="GO:0048471">
    <property type="term" value="C:perinuclear region of cytoplasm"/>
    <property type="evidence" value="ECO:0007669"/>
    <property type="project" value="UniProtKB-SubCell"/>
</dbReference>
<dbReference type="GO" id="GO:0005886">
    <property type="term" value="C:plasma membrane"/>
    <property type="evidence" value="ECO:0007669"/>
    <property type="project" value="UniProtKB-SubCell"/>
</dbReference>
<dbReference type="GO" id="GO:0019705">
    <property type="term" value="F:protein-cysteine S-myristoyltransferase activity"/>
    <property type="evidence" value="ECO:0007669"/>
    <property type="project" value="RHEA"/>
</dbReference>
<dbReference type="GO" id="GO:0019706">
    <property type="term" value="F:protein-cysteine S-palmitoyltransferase activity"/>
    <property type="evidence" value="ECO:0000250"/>
    <property type="project" value="UniProtKB"/>
</dbReference>
<dbReference type="GO" id="GO:0140439">
    <property type="term" value="F:protein-cysteine S-stearoyltransferase activity"/>
    <property type="evidence" value="ECO:0007669"/>
    <property type="project" value="RHEA"/>
</dbReference>
<dbReference type="GO" id="GO:0008270">
    <property type="term" value="F:zinc ion binding"/>
    <property type="evidence" value="ECO:0000250"/>
    <property type="project" value="UniProtKB"/>
</dbReference>
<dbReference type="GO" id="GO:0018230">
    <property type="term" value="P:peptidyl-L-cysteine S-palmitoylation"/>
    <property type="evidence" value="ECO:0000250"/>
    <property type="project" value="UniProtKB"/>
</dbReference>
<dbReference type="GO" id="GO:0018345">
    <property type="term" value="P:protein palmitoylation"/>
    <property type="evidence" value="ECO:0000250"/>
    <property type="project" value="UniProtKB"/>
</dbReference>
<dbReference type="GO" id="GO:0006612">
    <property type="term" value="P:protein targeting to membrane"/>
    <property type="evidence" value="ECO:0000318"/>
    <property type="project" value="GO_Central"/>
</dbReference>
<dbReference type="GO" id="GO:0016188">
    <property type="term" value="P:synaptic vesicle maturation"/>
    <property type="evidence" value="ECO:0000318"/>
    <property type="project" value="GO_Central"/>
</dbReference>
<dbReference type="InterPro" id="IPR001594">
    <property type="entry name" value="Palmitoyltrfase_DHHC"/>
</dbReference>
<dbReference type="InterPro" id="IPR039859">
    <property type="entry name" value="PFA4/ZDH16/20/ERF2-like"/>
</dbReference>
<dbReference type="PANTHER" id="PTHR12246">
    <property type="entry name" value="PALMITOYLTRANSFERASE ZDHHC16"/>
    <property type="match status" value="1"/>
</dbReference>
<dbReference type="Pfam" id="PF01529">
    <property type="entry name" value="DHHC"/>
    <property type="match status" value="1"/>
</dbReference>
<dbReference type="PROSITE" id="PS50216">
    <property type="entry name" value="DHHC"/>
    <property type="match status" value="1"/>
</dbReference>
<evidence type="ECO:0000250" key="1">
    <source>
        <dbReference type="UniProtKB" id="Q5W0Z9"/>
    </source>
</evidence>
<evidence type="ECO:0000255" key="2"/>
<evidence type="ECO:0000255" key="3">
    <source>
        <dbReference type="PROSITE-ProRule" id="PRU00067"/>
    </source>
</evidence>
<evidence type="ECO:0000256" key="4">
    <source>
        <dbReference type="SAM" id="MobiDB-lite"/>
    </source>
</evidence>
<evidence type="ECO:0000305" key="5"/>
<protein>
    <recommendedName>
        <fullName evidence="5">Palmitoyltransferase ZDHHC20</fullName>
        <ecNumber evidence="1">2.3.1.225</ecNumber>
    </recommendedName>
    <alternativeName>
        <fullName evidence="1">Acyltransferase ZDHHC20</fullName>
        <ecNumber evidence="1">2.3.1.-</ecNumber>
    </alternativeName>
    <alternativeName>
        <fullName evidence="1">Zinc finger DHHC domain-containing protein 20</fullName>
    </alternativeName>
</protein>
<keyword id="KW-0012">Acyltransferase</keyword>
<keyword id="KW-1003">Cell membrane</keyword>
<keyword id="KW-0963">Cytoplasm</keyword>
<keyword id="KW-0256">Endoplasmic reticulum</keyword>
<keyword id="KW-0333">Golgi apparatus</keyword>
<keyword id="KW-0449">Lipoprotein</keyword>
<keyword id="KW-0472">Membrane</keyword>
<keyword id="KW-0479">Metal-binding</keyword>
<keyword id="KW-0564">Palmitate</keyword>
<keyword id="KW-0597">Phosphoprotein</keyword>
<keyword id="KW-1185">Reference proteome</keyword>
<keyword id="KW-0808">Transferase</keyword>
<keyword id="KW-0812">Transmembrane</keyword>
<keyword id="KW-1133">Transmembrane helix</keyword>
<keyword id="KW-0862">Zinc</keyword>
<proteinExistence type="evidence at transcript level"/>
<accession>Q0VC89</accession>
<sequence>MAPCTLWRCCQRTVGWVPVLFITFVVVWSYYAYVVELCVFTLSGNGENGKAVVYLVAFHLFFVMFVWSYWMTIFTSPASPSKEFCLSNSEKERYEKEFSQERQQEILRRAARDLPIYTTSASKTVRYCERCQLIKPDRAHHCSACDMCILKMDHHCPWVNNCVGFSNYKFFLLFLFYSLLYCLFVATTVLQYFIKFWTNELTDTRAKFHVLFLFFVSTMFFISVLSLLSYHCWLVGKNRTTIESFRAPMFSYGTDGNGFSLGCSKNWRQVFGDEKKYWLLPVFSSQGDGCSFPTRLVGTDPEQASVSNQSESARSIGSNQPFPIKPLSESKNRLLDSDPQWLESGSEEGVGGSGTNNHVTVAIEN</sequence>
<feature type="chain" id="PRO_0000269230" description="Palmitoyltransferase ZDHHC20">
    <location>
        <begin position="1"/>
        <end position="365"/>
    </location>
</feature>
<feature type="topological domain" description="Cytoplasmic" evidence="1">
    <location>
        <begin position="1"/>
        <end position="14"/>
    </location>
</feature>
<feature type="transmembrane region" description="Helical" evidence="1">
    <location>
        <begin position="15"/>
        <end position="35"/>
    </location>
</feature>
<feature type="topological domain" description="Lumenal" evidence="1">
    <location>
        <begin position="36"/>
        <end position="53"/>
    </location>
</feature>
<feature type="transmembrane region" description="Helical" evidence="1">
    <location>
        <begin position="54"/>
        <end position="74"/>
    </location>
</feature>
<feature type="topological domain" description="Cytoplasmic" evidence="1">
    <location>
        <begin position="75"/>
        <end position="169"/>
    </location>
</feature>
<feature type="transmembrane region" description="Helical" evidence="1">
    <location>
        <begin position="170"/>
        <end position="190"/>
    </location>
</feature>
<feature type="topological domain" description="Lumenal" evidence="1">
    <location>
        <begin position="191"/>
        <end position="207"/>
    </location>
</feature>
<feature type="transmembrane region" description="Helical" evidence="1">
    <location>
        <begin position="208"/>
        <end position="231"/>
    </location>
</feature>
<feature type="topological domain" description="Cytoplasmic" evidence="1">
    <location>
        <begin position="232"/>
        <end position="365"/>
    </location>
</feature>
<feature type="domain" description="DHHC" evidence="3">
    <location>
        <begin position="126"/>
        <end position="176"/>
    </location>
</feature>
<feature type="region of interest" description="Disordered" evidence="4">
    <location>
        <begin position="301"/>
        <end position="365"/>
    </location>
</feature>
<feature type="compositionally biased region" description="Polar residues" evidence="4">
    <location>
        <begin position="302"/>
        <end position="321"/>
    </location>
</feature>
<feature type="active site" description="S-palmitoyl cysteine intermediate" evidence="1">
    <location>
        <position position="156"/>
    </location>
</feature>
<feature type="binding site" evidence="1">
    <location>
        <position position="128"/>
    </location>
    <ligand>
        <name>Zn(2+)</name>
        <dbReference type="ChEBI" id="CHEBI:29105"/>
        <label>1</label>
    </ligand>
</feature>
<feature type="binding site" evidence="1">
    <location>
        <position position="131"/>
    </location>
    <ligand>
        <name>Zn(2+)</name>
        <dbReference type="ChEBI" id="CHEBI:29105"/>
        <label>1</label>
    </ligand>
</feature>
<feature type="binding site" evidence="1">
    <location>
        <position position="135"/>
    </location>
    <ligand>
        <name>substrate</name>
    </ligand>
</feature>
<feature type="binding site" evidence="1">
    <location>
        <begin position="140"/>
        <end position="143"/>
    </location>
    <ligand>
        <name>substrate</name>
    </ligand>
</feature>
<feature type="binding site" evidence="1">
    <location>
        <position position="141"/>
    </location>
    <ligand>
        <name>Zn(2+)</name>
        <dbReference type="ChEBI" id="CHEBI:29105"/>
        <label>1</label>
    </ligand>
</feature>
<feature type="binding site" evidence="1">
    <location>
        <position position="142"/>
    </location>
    <ligand>
        <name>Zn(2+)</name>
        <dbReference type="ChEBI" id="CHEBI:29105"/>
        <label>2</label>
    </ligand>
</feature>
<feature type="binding site" evidence="1">
    <location>
        <position position="145"/>
    </location>
    <ligand>
        <name>Zn(2+)</name>
        <dbReference type="ChEBI" id="CHEBI:29105"/>
        <label>2</label>
    </ligand>
</feature>
<feature type="binding site" evidence="1">
    <location>
        <position position="148"/>
    </location>
    <ligand>
        <name>Zn(2+)</name>
        <dbReference type="ChEBI" id="CHEBI:29105"/>
        <label>1</label>
    </ligand>
</feature>
<feature type="binding site" evidence="1">
    <location>
        <position position="155"/>
    </location>
    <ligand>
        <name>Zn(2+)</name>
        <dbReference type="ChEBI" id="CHEBI:29105"/>
        <label>2</label>
    </ligand>
</feature>
<feature type="binding site" evidence="1">
    <location>
        <position position="162"/>
    </location>
    <ligand>
        <name>Zn(2+)</name>
        <dbReference type="ChEBI" id="CHEBI:29105"/>
        <label>2</label>
    </ligand>
</feature>
<feature type="site" description="Important for selectivity toward medium-length fatty acids" evidence="1">
    <location>
        <position position="29"/>
    </location>
</feature>
<feature type="site" description="Important for selectivity toward medium-length fatty acids" evidence="1">
    <location>
        <position position="181"/>
    </location>
</feature>
<feature type="modified residue" description="Phosphoserine" evidence="1">
    <location>
        <position position="305"/>
    </location>
</feature>
<feature type="modified residue" description="Phosphoserine" evidence="1">
    <location>
        <position position="330"/>
    </location>
</feature>
<name>ZDH20_BOVIN</name>
<reference key="1">
    <citation type="submission" date="2006-08" db="EMBL/GenBank/DDBJ databases">
        <authorList>
            <consortium name="NIH - Mammalian Gene Collection (MGC) project"/>
        </authorList>
    </citation>
    <scope>NUCLEOTIDE SEQUENCE [LARGE SCALE MRNA]</scope>
    <source>
        <strain>Hereford</strain>
        <tissue>Placenta</tissue>
    </source>
</reference>
<gene>
    <name evidence="1" type="primary">ZDHHC20</name>
</gene>